<organism>
    <name type="scientific">Nitrobacter winogradskyi (strain ATCC 25391 / DSM 10237 / CIP 104748 / NCIMB 11846 / Nb-255)</name>
    <dbReference type="NCBI Taxonomy" id="323098"/>
    <lineage>
        <taxon>Bacteria</taxon>
        <taxon>Pseudomonadati</taxon>
        <taxon>Pseudomonadota</taxon>
        <taxon>Alphaproteobacteria</taxon>
        <taxon>Hyphomicrobiales</taxon>
        <taxon>Nitrobacteraceae</taxon>
        <taxon>Nitrobacter</taxon>
    </lineage>
</organism>
<accession>Q3ST04</accession>
<dbReference type="EMBL" id="CP000115">
    <property type="protein sequence ID" value="ABA04587.1"/>
    <property type="molecule type" value="Genomic_DNA"/>
</dbReference>
<dbReference type="RefSeq" id="WP_011314605.1">
    <property type="nucleotide sequence ID" value="NC_007406.1"/>
</dbReference>
<dbReference type="STRING" id="323098.Nwi_1326"/>
<dbReference type="KEGG" id="nwi:Nwi_1326"/>
<dbReference type="eggNOG" id="COG0759">
    <property type="taxonomic scope" value="Bacteria"/>
</dbReference>
<dbReference type="HOGENOM" id="CLU_144811_0_0_5"/>
<dbReference type="OrthoDB" id="9801753at2"/>
<dbReference type="Proteomes" id="UP000002531">
    <property type="component" value="Chromosome"/>
</dbReference>
<dbReference type="GO" id="GO:0005886">
    <property type="term" value="C:plasma membrane"/>
    <property type="evidence" value="ECO:0007669"/>
    <property type="project" value="UniProtKB-SubCell"/>
</dbReference>
<dbReference type="HAMAP" id="MF_00386">
    <property type="entry name" value="UPF0161_YidD"/>
    <property type="match status" value="1"/>
</dbReference>
<dbReference type="InterPro" id="IPR002696">
    <property type="entry name" value="Membr_insert_effic_factor_YidD"/>
</dbReference>
<dbReference type="NCBIfam" id="TIGR00278">
    <property type="entry name" value="membrane protein insertion efficiency factor YidD"/>
    <property type="match status" value="1"/>
</dbReference>
<dbReference type="PANTHER" id="PTHR33383">
    <property type="entry name" value="MEMBRANE PROTEIN INSERTION EFFICIENCY FACTOR-RELATED"/>
    <property type="match status" value="1"/>
</dbReference>
<dbReference type="PANTHER" id="PTHR33383:SF1">
    <property type="entry name" value="MEMBRANE PROTEIN INSERTION EFFICIENCY FACTOR-RELATED"/>
    <property type="match status" value="1"/>
</dbReference>
<dbReference type="Pfam" id="PF01809">
    <property type="entry name" value="YidD"/>
    <property type="match status" value="1"/>
</dbReference>
<dbReference type="SMART" id="SM01234">
    <property type="entry name" value="Haemolytic"/>
    <property type="match status" value="1"/>
</dbReference>
<keyword id="KW-0997">Cell inner membrane</keyword>
<keyword id="KW-1003">Cell membrane</keyword>
<keyword id="KW-0472">Membrane</keyword>
<keyword id="KW-1185">Reference proteome</keyword>
<comment type="function">
    <text evidence="1">Could be involved in insertion of integral membrane proteins into the membrane.</text>
</comment>
<comment type="subcellular location">
    <subcellularLocation>
        <location evidence="1">Cell inner membrane</location>
        <topology evidence="1">Peripheral membrane protein</topology>
        <orientation evidence="1">Cytoplasmic side</orientation>
    </subcellularLocation>
</comment>
<comment type="similarity">
    <text evidence="1">Belongs to the UPF0161 family.</text>
</comment>
<name>YIDD_NITWN</name>
<protein>
    <recommendedName>
        <fullName evidence="1">Putative membrane protein insertion efficiency factor</fullName>
    </recommendedName>
</protein>
<feature type="chain" id="PRO_0000253131" description="Putative membrane protein insertion efficiency factor">
    <location>
        <begin position="1"/>
        <end position="117"/>
    </location>
</feature>
<proteinExistence type="inferred from homology"/>
<evidence type="ECO:0000255" key="1">
    <source>
        <dbReference type="HAMAP-Rule" id="MF_00386"/>
    </source>
</evidence>
<gene>
    <name type="ordered locus">Nwi_1326</name>
</gene>
<reference key="1">
    <citation type="journal article" date="2006" name="Appl. Environ. Microbiol.">
        <title>Genome sequence of the chemolithoautotrophic nitrite-oxidizing bacterium Nitrobacter winogradskyi Nb-255.</title>
        <authorList>
            <person name="Starkenburg S.R."/>
            <person name="Chain P.S.G."/>
            <person name="Sayavedra-Soto L.A."/>
            <person name="Hauser L."/>
            <person name="Land M.L."/>
            <person name="Larimer F.W."/>
            <person name="Malfatti S.A."/>
            <person name="Klotz M.G."/>
            <person name="Bottomley P.J."/>
            <person name="Arp D.J."/>
            <person name="Hickey W.J."/>
        </authorList>
    </citation>
    <scope>NUCLEOTIDE SEQUENCE [LARGE SCALE GENOMIC DNA]</scope>
    <source>
        <strain>ATCC 25391 / DSM 10237 / CIP 104748 / NCIMB 11846 / Nb-255</strain>
    </source>
</reference>
<sequence length="117" mass="13158">MKTIPSEVRCSRLCPACTNAALRLPRNAGRALIWIYRHTLSPLVGFNCRHLPTCSAYGDEAIARFGLWGGGWMTLARILRCRPWGTSGIDNVPVAKPSGATWYRPWRYGRWRGVNAK</sequence>